<evidence type="ECO:0000250" key="1">
    <source>
        <dbReference type="UniProtKB" id="P19267"/>
    </source>
</evidence>
<evidence type="ECO:0000305" key="2"/>
<organism>
    <name type="scientific">Pyrococcus furiosus (strain ATCC 43587 / DSM 3638 / JCM 8422 / Vc1)</name>
    <dbReference type="NCBI Taxonomy" id="186497"/>
    <lineage>
        <taxon>Archaea</taxon>
        <taxon>Methanobacteriati</taxon>
        <taxon>Methanobacteriota</taxon>
        <taxon>Thermococci</taxon>
        <taxon>Thermococcales</taxon>
        <taxon>Thermococcaceae</taxon>
        <taxon>Pyrococcus</taxon>
    </lineage>
</organism>
<sequence length="67" mass="7282">MGELPIAPVDRLIRKAGAQRVSEQAAKVLAEHLEEKAIEIAKKAVDLAKHAGRKTVKVEDIKLAIKS</sequence>
<dbReference type="EMBL" id="AB013081">
    <property type="protein sequence ID" value="BAA25805.1"/>
    <property type="status" value="ALT_INIT"/>
    <property type="molecule type" value="Genomic_DNA"/>
</dbReference>
<dbReference type="EMBL" id="AE009950">
    <property type="protein sequence ID" value="AAL81846.1"/>
    <property type="molecule type" value="Genomic_DNA"/>
</dbReference>
<dbReference type="SMR" id="O59627"/>
<dbReference type="STRING" id="186497.PF1722"/>
<dbReference type="PaxDb" id="186497-PF1722"/>
<dbReference type="KEGG" id="pfu:PF1722"/>
<dbReference type="PATRIC" id="fig|186497.12.peg.1790"/>
<dbReference type="eggNOG" id="arCOG02144">
    <property type="taxonomic scope" value="Archaea"/>
</dbReference>
<dbReference type="HOGENOM" id="CLU_192667_0_0_2"/>
<dbReference type="OrthoDB" id="7514at2157"/>
<dbReference type="PhylomeDB" id="O59627"/>
<dbReference type="Proteomes" id="UP000001013">
    <property type="component" value="Chromosome"/>
</dbReference>
<dbReference type="GO" id="GO:0005694">
    <property type="term" value="C:chromosome"/>
    <property type="evidence" value="ECO:0007669"/>
    <property type="project" value="UniProtKB-SubCell"/>
</dbReference>
<dbReference type="GO" id="GO:0005737">
    <property type="term" value="C:cytoplasm"/>
    <property type="evidence" value="ECO:0007669"/>
    <property type="project" value="UniProtKB-SubCell"/>
</dbReference>
<dbReference type="GO" id="GO:0003677">
    <property type="term" value="F:DNA binding"/>
    <property type="evidence" value="ECO:0007669"/>
    <property type="project" value="UniProtKB-KW"/>
</dbReference>
<dbReference type="GO" id="GO:0046982">
    <property type="term" value="F:protein heterodimerization activity"/>
    <property type="evidence" value="ECO:0007669"/>
    <property type="project" value="InterPro"/>
</dbReference>
<dbReference type="CDD" id="cd22909">
    <property type="entry name" value="HFD_archaea_histone-like"/>
    <property type="match status" value="1"/>
</dbReference>
<dbReference type="Gene3D" id="1.10.20.10">
    <property type="entry name" value="Histone, subunit A"/>
    <property type="match status" value="1"/>
</dbReference>
<dbReference type="InterPro" id="IPR050947">
    <property type="entry name" value="Archaeal_histone_HMF"/>
</dbReference>
<dbReference type="InterPro" id="IPR003958">
    <property type="entry name" value="CBFA_NFYB_domain"/>
</dbReference>
<dbReference type="InterPro" id="IPR009072">
    <property type="entry name" value="Histone-fold"/>
</dbReference>
<dbReference type="InterPro" id="IPR050004">
    <property type="entry name" value="HmfB-like"/>
</dbReference>
<dbReference type="NCBIfam" id="NF043032">
    <property type="entry name" value="archaea_histone"/>
    <property type="match status" value="1"/>
</dbReference>
<dbReference type="PANTHER" id="PTHR47828">
    <property type="entry name" value="ARCHAEAL HISTONE A"/>
    <property type="match status" value="1"/>
</dbReference>
<dbReference type="PANTHER" id="PTHR47828:SF1">
    <property type="entry name" value="ARCHAEAL HISTONE A"/>
    <property type="match status" value="1"/>
</dbReference>
<dbReference type="Pfam" id="PF00808">
    <property type="entry name" value="CBFD_NFYB_HMF"/>
    <property type="match status" value="1"/>
</dbReference>
<dbReference type="SUPFAM" id="SSF47113">
    <property type="entry name" value="Histone-fold"/>
    <property type="match status" value="1"/>
</dbReference>
<name>HARB_PYRFU</name>
<protein>
    <recommendedName>
        <fullName>Archaeal histone B</fullName>
    </recommendedName>
    <alternativeName>
        <fullName>Archaeal histone A2</fullName>
    </alternativeName>
</protein>
<reference key="1">
    <citation type="submission" date="1998-04" db="EMBL/GenBank/DDBJ databases">
        <authorList>
            <person name="Kanai A."/>
            <person name="Oida H."/>
            <person name="Hasegawa A."/>
            <person name="Doi H."/>
        </authorList>
    </citation>
    <scope>NUCLEOTIDE SEQUENCE [GENOMIC DNA]</scope>
    <source>
        <strain>ATCC 43587 / DSM 3638 / JCM 8422 / Vc1</strain>
    </source>
</reference>
<reference key="2">
    <citation type="journal article" date="1999" name="Genetics">
        <title>Divergence of the hyperthermophilic archaea Pyrococcus furiosus and P. horikoshii inferred from complete genomic sequences.</title>
        <authorList>
            <person name="Maeder D.L."/>
            <person name="Weiss R.B."/>
            <person name="Dunn D.M."/>
            <person name="Cherry J.L."/>
            <person name="Gonzalez J.M."/>
            <person name="DiRuggiero J."/>
            <person name="Robb F.T."/>
        </authorList>
    </citation>
    <scope>NUCLEOTIDE SEQUENCE [LARGE SCALE GENOMIC DNA]</scope>
    <source>
        <strain>ATCC 43587 / DSM 3638 / JCM 8422 / Vc1</strain>
    </source>
</reference>
<gene>
    <name type="ordered locus">PF1722</name>
</gene>
<proteinExistence type="inferred from homology"/>
<accession>O59627</accession>
<feature type="chain" id="PRO_0000155000" description="Archaeal histone B">
    <location>
        <begin position="1"/>
        <end position="67"/>
    </location>
</feature>
<feature type="region of interest" description="Interaction with DNA" evidence="1">
    <location>
        <begin position="20"/>
        <end position="22"/>
    </location>
</feature>
<feature type="region of interest" description="Interaction with DNA" evidence="1">
    <location>
        <begin position="54"/>
        <end position="57"/>
    </location>
</feature>
<comment type="function">
    <text evidence="1">Binds and compact DNA (95 to 150 base pairs) to form nucleosome-like structures that contain positive DNA supercoils. Increases the resistance of DNA to thermal denaturation (in vitro).</text>
</comment>
<comment type="subunit">
    <text evidence="1">Homodimer or heterodimer with another histone. Dimers then assemble into higher oligomers, with the DNA wrapped around the protein core (By similarity).</text>
</comment>
<comment type="subcellular location">
    <subcellularLocation>
        <location evidence="2">Cytoplasm</location>
    </subcellularLocation>
    <subcellularLocation>
        <location evidence="2">Chromosome</location>
    </subcellularLocation>
</comment>
<comment type="similarity">
    <text evidence="2">Belongs to the archaeal histone HMF family.</text>
</comment>
<comment type="sequence caution" evidence="2">
    <conflict type="erroneous initiation">
        <sequence resource="EMBL-CDS" id="BAA25805"/>
    </conflict>
</comment>
<keyword id="KW-0158">Chromosome</keyword>
<keyword id="KW-0963">Cytoplasm</keyword>
<keyword id="KW-0238">DNA-binding</keyword>
<keyword id="KW-1185">Reference proteome</keyword>